<evidence type="ECO:0000255" key="1">
    <source>
        <dbReference type="HAMAP-Rule" id="MF_00148"/>
    </source>
</evidence>
<sequence>MTARALDELVEPGWAKALEPVADQVTAMGQFLRAELAAGRKYLPAGPNVLRAFTFPFDQVRILIVGQDPYPTPGHAVGLSFSVAPDVRPLPRSLSNIFQEYADDLGYPMPACGDLTPWAQRGVMLLNRVLTVRPSNPASHRGKGWEAVTECAIRALAARSQPMVAILWGRDASTLKSMLAGGDCASIESPHPSPLSASRGFFGSRPFSRANELLTGRGADPIDWRLP</sequence>
<gene>
    <name evidence="1" type="primary">ung</name>
    <name type="ordered locus">MUL_1980</name>
</gene>
<dbReference type="EC" id="3.2.2.27" evidence="1"/>
<dbReference type="EMBL" id="CP000325">
    <property type="protein sequence ID" value="ABL04426.1"/>
    <property type="molecule type" value="Genomic_DNA"/>
</dbReference>
<dbReference type="RefSeq" id="WP_011740045.1">
    <property type="nucleotide sequence ID" value="NC_008611.1"/>
</dbReference>
<dbReference type="SMR" id="A0PQ07"/>
<dbReference type="KEGG" id="mul:MUL_1980"/>
<dbReference type="eggNOG" id="COG0692">
    <property type="taxonomic scope" value="Bacteria"/>
</dbReference>
<dbReference type="HOGENOM" id="CLU_032162_3_1_11"/>
<dbReference type="Proteomes" id="UP000000765">
    <property type="component" value="Chromosome"/>
</dbReference>
<dbReference type="GO" id="GO:0005737">
    <property type="term" value="C:cytoplasm"/>
    <property type="evidence" value="ECO:0007669"/>
    <property type="project" value="UniProtKB-SubCell"/>
</dbReference>
<dbReference type="GO" id="GO:0004844">
    <property type="term" value="F:uracil DNA N-glycosylase activity"/>
    <property type="evidence" value="ECO:0007669"/>
    <property type="project" value="UniProtKB-UniRule"/>
</dbReference>
<dbReference type="GO" id="GO:0097510">
    <property type="term" value="P:base-excision repair, AP site formation via deaminated base removal"/>
    <property type="evidence" value="ECO:0007669"/>
    <property type="project" value="TreeGrafter"/>
</dbReference>
<dbReference type="CDD" id="cd10027">
    <property type="entry name" value="UDG-F1-like"/>
    <property type="match status" value="1"/>
</dbReference>
<dbReference type="FunFam" id="3.40.470.10:FF:000006">
    <property type="entry name" value="Uracil-DNA glycosylase"/>
    <property type="match status" value="1"/>
</dbReference>
<dbReference type="Gene3D" id="3.40.470.10">
    <property type="entry name" value="Uracil-DNA glycosylase-like domain"/>
    <property type="match status" value="1"/>
</dbReference>
<dbReference type="HAMAP" id="MF_00148">
    <property type="entry name" value="UDG"/>
    <property type="match status" value="1"/>
</dbReference>
<dbReference type="InterPro" id="IPR002043">
    <property type="entry name" value="UDG_fam1"/>
</dbReference>
<dbReference type="InterPro" id="IPR018085">
    <property type="entry name" value="Ura-DNA_Glyclase_AS"/>
</dbReference>
<dbReference type="InterPro" id="IPR005122">
    <property type="entry name" value="Uracil-DNA_glycosylase-like"/>
</dbReference>
<dbReference type="InterPro" id="IPR036895">
    <property type="entry name" value="Uracil-DNA_glycosylase-like_sf"/>
</dbReference>
<dbReference type="NCBIfam" id="NF003588">
    <property type="entry name" value="PRK05254.1-1"/>
    <property type="match status" value="1"/>
</dbReference>
<dbReference type="NCBIfam" id="NF003592">
    <property type="entry name" value="PRK05254.1-5"/>
    <property type="match status" value="1"/>
</dbReference>
<dbReference type="NCBIfam" id="TIGR00628">
    <property type="entry name" value="ung"/>
    <property type="match status" value="1"/>
</dbReference>
<dbReference type="PANTHER" id="PTHR11264">
    <property type="entry name" value="URACIL-DNA GLYCOSYLASE"/>
    <property type="match status" value="1"/>
</dbReference>
<dbReference type="PANTHER" id="PTHR11264:SF0">
    <property type="entry name" value="URACIL-DNA GLYCOSYLASE"/>
    <property type="match status" value="1"/>
</dbReference>
<dbReference type="Pfam" id="PF03167">
    <property type="entry name" value="UDG"/>
    <property type="match status" value="1"/>
</dbReference>
<dbReference type="SMART" id="SM00986">
    <property type="entry name" value="UDG"/>
    <property type="match status" value="1"/>
</dbReference>
<dbReference type="SMART" id="SM00987">
    <property type="entry name" value="UreE_C"/>
    <property type="match status" value="1"/>
</dbReference>
<dbReference type="SUPFAM" id="SSF52141">
    <property type="entry name" value="Uracil-DNA glycosylase-like"/>
    <property type="match status" value="1"/>
</dbReference>
<dbReference type="PROSITE" id="PS00130">
    <property type="entry name" value="U_DNA_GLYCOSYLASE"/>
    <property type="match status" value="1"/>
</dbReference>
<reference key="1">
    <citation type="journal article" date="2007" name="Genome Res.">
        <title>Reductive evolution and niche adaptation inferred from the genome of Mycobacterium ulcerans, the causative agent of Buruli ulcer.</title>
        <authorList>
            <person name="Stinear T.P."/>
            <person name="Seemann T."/>
            <person name="Pidot S."/>
            <person name="Frigui W."/>
            <person name="Reysset G."/>
            <person name="Garnier T."/>
            <person name="Meurice G."/>
            <person name="Simon D."/>
            <person name="Bouchier C."/>
            <person name="Ma L."/>
            <person name="Tichit M."/>
            <person name="Porter J.L."/>
            <person name="Ryan J."/>
            <person name="Johnson P.D.R."/>
            <person name="Davies J.K."/>
            <person name="Jenkin G.A."/>
            <person name="Small P.L.C."/>
            <person name="Jones L.M."/>
            <person name="Tekaia F."/>
            <person name="Laval F."/>
            <person name="Daffe M."/>
            <person name="Parkhill J."/>
            <person name="Cole S.T."/>
        </authorList>
    </citation>
    <scope>NUCLEOTIDE SEQUENCE [LARGE SCALE GENOMIC DNA]</scope>
    <source>
        <strain>Agy99</strain>
    </source>
</reference>
<name>UNG_MYCUA</name>
<protein>
    <recommendedName>
        <fullName evidence="1">Uracil-DNA glycosylase</fullName>
        <shortName evidence="1">UDG</shortName>
        <ecNumber evidence="1">3.2.2.27</ecNumber>
    </recommendedName>
</protein>
<comment type="function">
    <text evidence="1">Excises uracil residues from the DNA which can arise as a result of misincorporation of dUMP residues by DNA polymerase or due to deamination of cytosine.</text>
</comment>
<comment type="catalytic activity">
    <reaction evidence="1">
        <text>Hydrolyzes single-stranded DNA or mismatched double-stranded DNA and polynucleotides, releasing free uracil.</text>
        <dbReference type="EC" id="3.2.2.27"/>
    </reaction>
</comment>
<comment type="subcellular location">
    <subcellularLocation>
        <location evidence="1">Cytoplasm</location>
    </subcellularLocation>
</comment>
<comment type="similarity">
    <text evidence="1">Belongs to the uracil-DNA glycosylase (UDG) superfamily. UNG family.</text>
</comment>
<keyword id="KW-0963">Cytoplasm</keyword>
<keyword id="KW-0227">DNA damage</keyword>
<keyword id="KW-0234">DNA repair</keyword>
<keyword id="KW-0378">Hydrolase</keyword>
<organism>
    <name type="scientific">Mycobacterium ulcerans (strain Agy99)</name>
    <dbReference type="NCBI Taxonomy" id="362242"/>
    <lineage>
        <taxon>Bacteria</taxon>
        <taxon>Bacillati</taxon>
        <taxon>Actinomycetota</taxon>
        <taxon>Actinomycetes</taxon>
        <taxon>Mycobacteriales</taxon>
        <taxon>Mycobacteriaceae</taxon>
        <taxon>Mycobacterium</taxon>
        <taxon>Mycobacterium ulcerans group</taxon>
    </lineage>
</organism>
<proteinExistence type="inferred from homology"/>
<accession>A0PQ07</accession>
<feature type="chain" id="PRO_1000009918" description="Uracil-DNA glycosylase">
    <location>
        <begin position="1"/>
        <end position="227"/>
    </location>
</feature>
<feature type="active site" description="Proton acceptor" evidence="1">
    <location>
        <position position="68"/>
    </location>
</feature>